<name>Y1964_CLOBH</name>
<proteinExistence type="inferred from homology"/>
<sequence>MLTKENLLALLKQEVVPALGCTEPVCVALATADAYHAIGGRIVSIKIEVNPGIYKNGMSVGIPGFDRVGLKYAASLGAVIGNPEKKLELLEDITAEVSQKAIKIVENSQVVVVIKHEEAQLYVRAEIITTAGMGISEIRGTHSNIIFTKRNNDMLLQKEYSVDSDDSLHQQLKLMGIAEIRKLIDECKEEELSFLLDGVDMNERLADYGLEHSLGIGIASALQEKMTTDIMGDNLFSRTMLRVASSAEGRMSGCPYAVMSSAGSGNHGITAILPVTEMARYLNSSREQLVKALAFSHTLNVYIKLFTGKLSATCGCGVSAATAASAAMVWLMGGNEHQIANAIINMSGNLTGMICDGGKIGCALKLATATNAALMCAYLAMSDVALQPSDGICDVTAEQVIRNMGQVSNPGMVETDQTILSIMIEKDQRK</sequence>
<feature type="chain" id="PRO_0000339795" description="UPF0597 protein CBO1964/CLC_1909">
    <location>
        <begin position="1"/>
        <end position="430"/>
    </location>
</feature>
<accession>A5I389</accession>
<accession>A7G4P9</accession>
<organism>
    <name type="scientific">Clostridium botulinum (strain Hall / ATCC 3502 / NCTC 13319 / Type A)</name>
    <dbReference type="NCBI Taxonomy" id="441771"/>
    <lineage>
        <taxon>Bacteria</taxon>
        <taxon>Bacillati</taxon>
        <taxon>Bacillota</taxon>
        <taxon>Clostridia</taxon>
        <taxon>Eubacteriales</taxon>
        <taxon>Clostridiaceae</taxon>
        <taxon>Clostridium</taxon>
    </lineage>
</organism>
<evidence type="ECO:0000255" key="1">
    <source>
        <dbReference type="HAMAP-Rule" id="MF_01845"/>
    </source>
</evidence>
<gene>
    <name type="ordered locus">CBO1964</name>
    <name type="ordered locus">CLC_1909</name>
</gene>
<dbReference type="EMBL" id="CP000727">
    <property type="protein sequence ID" value="ABS36556.1"/>
    <property type="molecule type" value="Genomic_DNA"/>
</dbReference>
<dbReference type="EMBL" id="AM412317">
    <property type="protein sequence ID" value="CAL83506.1"/>
    <property type="molecule type" value="Genomic_DNA"/>
</dbReference>
<dbReference type="RefSeq" id="WP_011986501.1">
    <property type="nucleotide sequence ID" value="NC_009698.1"/>
</dbReference>
<dbReference type="RefSeq" id="YP_001254467.1">
    <property type="nucleotide sequence ID" value="NC_009495.1"/>
</dbReference>
<dbReference type="RefSeq" id="YP_001387764.1">
    <property type="nucleotide sequence ID" value="NC_009698.1"/>
</dbReference>
<dbReference type="GeneID" id="5186219"/>
<dbReference type="KEGG" id="cbh:CLC_1909"/>
<dbReference type="KEGG" id="cbo:CBO1964"/>
<dbReference type="PATRIC" id="fig|413999.7.peg.1939"/>
<dbReference type="HOGENOM" id="CLU_051840_0_0_9"/>
<dbReference type="PRO" id="PR:A5I389"/>
<dbReference type="Proteomes" id="UP000001986">
    <property type="component" value="Chromosome"/>
</dbReference>
<dbReference type="GO" id="GO:0080146">
    <property type="term" value="F:L-cysteine desulfhydrase activity"/>
    <property type="evidence" value="ECO:0000318"/>
    <property type="project" value="GO_Central"/>
</dbReference>
<dbReference type="GO" id="GO:0019450">
    <property type="term" value="P:L-cysteine catabolic process to pyruvate"/>
    <property type="evidence" value="ECO:0000318"/>
    <property type="project" value="GO_Central"/>
</dbReference>
<dbReference type="HAMAP" id="MF_01845">
    <property type="entry name" value="UPF0597"/>
    <property type="match status" value="1"/>
</dbReference>
<dbReference type="InterPro" id="IPR005130">
    <property type="entry name" value="Ser_deHydtase-like_asu"/>
</dbReference>
<dbReference type="InterPro" id="IPR021144">
    <property type="entry name" value="UPF0597"/>
</dbReference>
<dbReference type="PANTHER" id="PTHR30501">
    <property type="entry name" value="UPF0597 PROTEIN YHAM"/>
    <property type="match status" value="1"/>
</dbReference>
<dbReference type="PANTHER" id="PTHR30501:SF2">
    <property type="entry name" value="UPF0597 PROTEIN YHAM"/>
    <property type="match status" value="1"/>
</dbReference>
<dbReference type="Pfam" id="PF03313">
    <property type="entry name" value="SDH_alpha"/>
    <property type="match status" value="1"/>
</dbReference>
<dbReference type="PIRSF" id="PIRSF006054">
    <property type="entry name" value="UCP006054"/>
    <property type="match status" value="1"/>
</dbReference>
<keyword id="KW-1185">Reference proteome</keyword>
<reference key="1">
    <citation type="journal article" date="2007" name="Genome Res.">
        <title>Genome sequence of a proteolytic (Group I) Clostridium botulinum strain Hall A and comparative analysis of the clostridial genomes.</title>
        <authorList>
            <person name="Sebaihia M."/>
            <person name="Peck M.W."/>
            <person name="Minton N.P."/>
            <person name="Thomson N.R."/>
            <person name="Holden M.T.G."/>
            <person name="Mitchell W.J."/>
            <person name="Carter A.T."/>
            <person name="Bentley S.D."/>
            <person name="Mason D.R."/>
            <person name="Crossman L."/>
            <person name="Paul C.J."/>
            <person name="Ivens A."/>
            <person name="Wells-Bennik M.H.J."/>
            <person name="Davis I.J."/>
            <person name="Cerdeno-Tarraga A.M."/>
            <person name="Churcher C."/>
            <person name="Quail M.A."/>
            <person name="Chillingworth T."/>
            <person name="Feltwell T."/>
            <person name="Fraser A."/>
            <person name="Goodhead I."/>
            <person name="Hance Z."/>
            <person name="Jagels K."/>
            <person name="Larke N."/>
            <person name="Maddison M."/>
            <person name="Moule S."/>
            <person name="Mungall K."/>
            <person name="Norbertczak H."/>
            <person name="Rabbinowitsch E."/>
            <person name="Sanders M."/>
            <person name="Simmonds M."/>
            <person name="White B."/>
            <person name="Whithead S."/>
            <person name="Parkhill J."/>
        </authorList>
    </citation>
    <scope>NUCLEOTIDE SEQUENCE [LARGE SCALE GENOMIC DNA]</scope>
    <source>
        <strain>Hall / ATCC 3502 / NCTC 13319 / Type A</strain>
    </source>
</reference>
<reference key="2">
    <citation type="journal article" date="2007" name="PLoS ONE">
        <title>Analysis of the neurotoxin complex genes in Clostridium botulinum A1-A4 and B1 strains: BoNT/A3, /Ba4 and /B1 clusters are located within plasmids.</title>
        <authorList>
            <person name="Smith T.J."/>
            <person name="Hill K.K."/>
            <person name="Foley B.T."/>
            <person name="Detter J.C."/>
            <person name="Munk A.C."/>
            <person name="Bruce D.C."/>
            <person name="Doggett N.A."/>
            <person name="Smith L.A."/>
            <person name="Marks J.D."/>
            <person name="Xie G."/>
            <person name="Brettin T.S."/>
        </authorList>
    </citation>
    <scope>NUCLEOTIDE SEQUENCE [LARGE SCALE GENOMIC DNA]</scope>
    <source>
        <strain>Hall / ATCC 3502 / NCTC 13319 / Type A</strain>
    </source>
</reference>
<protein>
    <recommendedName>
        <fullName evidence="1">UPF0597 protein CBO1964/CLC_1909</fullName>
    </recommendedName>
</protein>
<comment type="similarity">
    <text evidence="1">Belongs to the UPF0597 family.</text>
</comment>